<organism>
    <name type="scientific">Polynucleobacter asymbioticus (strain DSM 18221 / CIP 109841 / QLW-P1DMWA-1)</name>
    <name type="common">Polynucleobacter necessarius subsp. asymbioticus</name>
    <dbReference type="NCBI Taxonomy" id="312153"/>
    <lineage>
        <taxon>Bacteria</taxon>
        <taxon>Pseudomonadati</taxon>
        <taxon>Pseudomonadota</taxon>
        <taxon>Betaproteobacteria</taxon>
        <taxon>Burkholderiales</taxon>
        <taxon>Burkholderiaceae</taxon>
        <taxon>Polynucleobacter</taxon>
    </lineage>
</organism>
<feature type="chain" id="PRO_1000078799" description="Potassium-transporting ATPase KdpC subunit">
    <location>
        <begin position="1"/>
        <end position="189"/>
    </location>
</feature>
<feature type="transmembrane region" description="Helical" evidence="1">
    <location>
        <begin position="11"/>
        <end position="31"/>
    </location>
</feature>
<proteinExistence type="inferred from homology"/>
<name>KDPC_POLAQ</name>
<comment type="function">
    <text evidence="1">Part of the high-affinity ATP-driven potassium transport (or Kdp) system, which catalyzes the hydrolysis of ATP coupled with the electrogenic transport of potassium into the cytoplasm. This subunit acts as a catalytic chaperone that increases the ATP-binding affinity of the ATP-hydrolyzing subunit KdpB by the formation of a transient KdpB/KdpC/ATP ternary complex.</text>
</comment>
<comment type="subunit">
    <text evidence="1">The system is composed of three essential subunits: KdpA, KdpB and KdpC.</text>
</comment>
<comment type="subcellular location">
    <subcellularLocation>
        <location evidence="1">Cell inner membrane</location>
        <topology evidence="1">Single-pass membrane protein</topology>
    </subcellularLocation>
</comment>
<comment type="similarity">
    <text evidence="1">Belongs to the KdpC family.</text>
</comment>
<gene>
    <name evidence="1" type="primary">kdpC</name>
    <name type="ordered locus">Pnuc_1668</name>
</gene>
<sequence length="189" mass="20072">MKSIMRSCLGLFVLLTVITGVLYPVFVTGLAKTFFPSKASGSIVYQGDQAIGSELIGQNFTDAKYFWGRPSATGPQPYNGTASGGSNQGPLNPALVDAVKGRIEALQNADSTNQLPIPMDLVTASASGLDPEISPQAAQYQASRVAKARKMSLDNVNQLIAANTQDRQWGIFGEPRVNVLKLNLALDGN</sequence>
<protein>
    <recommendedName>
        <fullName evidence="1">Potassium-transporting ATPase KdpC subunit</fullName>
    </recommendedName>
    <alternativeName>
        <fullName evidence="1">ATP phosphohydrolase [potassium-transporting] C chain</fullName>
    </alternativeName>
    <alternativeName>
        <fullName evidence="1">Potassium-binding and translocating subunit C</fullName>
    </alternativeName>
    <alternativeName>
        <fullName evidence="1">Potassium-translocating ATPase C chain</fullName>
    </alternativeName>
</protein>
<keyword id="KW-0067">ATP-binding</keyword>
<keyword id="KW-0997">Cell inner membrane</keyword>
<keyword id="KW-1003">Cell membrane</keyword>
<keyword id="KW-0406">Ion transport</keyword>
<keyword id="KW-0472">Membrane</keyword>
<keyword id="KW-0547">Nucleotide-binding</keyword>
<keyword id="KW-0630">Potassium</keyword>
<keyword id="KW-0633">Potassium transport</keyword>
<keyword id="KW-1185">Reference proteome</keyword>
<keyword id="KW-0812">Transmembrane</keyword>
<keyword id="KW-1133">Transmembrane helix</keyword>
<keyword id="KW-0813">Transport</keyword>
<accession>A4SZG7</accession>
<dbReference type="EMBL" id="CP000655">
    <property type="protein sequence ID" value="ABP34881.1"/>
    <property type="molecule type" value="Genomic_DNA"/>
</dbReference>
<dbReference type="RefSeq" id="WP_011903504.1">
    <property type="nucleotide sequence ID" value="NC_009379.1"/>
</dbReference>
<dbReference type="SMR" id="A4SZG7"/>
<dbReference type="GeneID" id="31482056"/>
<dbReference type="KEGG" id="pnu:Pnuc_1668"/>
<dbReference type="eggNOG" id="COG2156">
    <property type="taxonomic scope" value="Bacteria"/>
</dbReference>
<dbReference type="HOGENOM" id="CLU_077094_2_0_4"/>
<dbReference type="Proteomes" id="UP000000231">
    <property type="component" value="Chromosome"/>
</dbReference>
<dbReference type="GO" id="GO:0005886">
    <property type="term" value="C:plasma membrane"/>
    <property type="evidence" value="ECO:0007669"/>
    <property type="project" value="UniProtKB-SubCell"/>
</dbReference>
<dbReference type="GO" id="GO:0005524">
    <property type="term" value="F:ATP binding"/>
    <property type="evidence" value="ECO:0007669"/>
    <property type="project" value="UniProtKB-UniRule"/>
</dbReference>
<dbReference type="GO" id="GO:0008556">
    <property type="term" value="F:P-type potassium transmembrane transporter activity"/>
    <property type="evidence" value="ECO:0007669"/>
    <property type="project" value="InterPro"/>
</dbReference>
<dbReference type="HAMAP" id="MF_00276">
    <property type="entry name" value="KdpC"/>
    <property type="match status" value="1"/>
</dbReference>
<dbReference type="InterPro" id="IPR003820">
    <property type="entry name" value="KdpC"/>
</dbReference>
<dbReference type="NCBIfam" id="TIGR00681">
    <property type="entry name" value="kdpC"/>
    <property type="match status" value="1"/>
</dbReference>
<dbReference type="NCBIfam" id="NF001454">
    <property type="entry name" value="PRK00315.1"/>
    <property type="match status" value="1"/>
</dbReference>
<dbReference type="PANTHER" id="PTHR30042">
    <property type="entry name" value="POTASSIUM-TRANSPORTING ATPASE C CHAIN"/>
    <property type="match status" value="1"/>
</dbReference>
<dbReference type="PANTHER" id="PTHR30042:SF2">
    <property type="entry name" value="POTASSIUM-TRANSPORTING ATPASE KDPC SUBUNIT"/>
    <property type="match status" value="1"/>
</dbReference>
<dbReference type="Pfam" id="PF02669">
    <property type="entry name" value="KdpC"/>
    <property type="match status" value="1"/>
</dbReference>
<dbReference type="PIRSF" id="PIRSF001296">
    <property type="entry name" value="K_ATPase_KdpC"/>
    <property type="match status" value="1"/>
</dbReference>
<reference key="1">
    <citation type="journal article" date="2012" name="Stand. Genomic Sci.">
        <title>Complete genome sequence of Polynucleobacter necessarius subsp. asymbioticus type strain (QLW-P1DMWA-1(T)).</title>
        <authorList>
            <person name="Meincke L."/>
            <person name="Copeland A."/>
            <person name="Lapidus A."/>
            <person name="Lucas S."/>
            <person name="Berry K.W."/>
            <person name="Del Rio T.G."/>
            <person name="Hammon N."/>
            <person name="Dalin E."/>
            <person name="Tice H."/>
            <person name="Pitluck S."/>
            <person name="Richardson P."/>
            <person name="Bruce D."/>
            <person name="Goodwin L."/>
            <person name="Han C."/>
            <person name="Tapia R."/>
            <person name="Detter J.C."/>
            <person name="Schmutz J."/>
            <person name="Brettin T."/>
            <person name="Larimer F."/>
            <person name="Land M."/>
            <person name="Hauser L."/>
            <person name="Kyrpides N.C."/>
            <person name="Ivanova N."/>
            <person name="Goker M."/>
            <person name="Woyke T."/>
            <person name="Wu Q.L."/>
            <person name="Pockl M."/>
            <person name="Hahn M.W."/>
            <person name="Klenk H.P."/>
        </authorList>
    </citation>
    <scope>NUCLEOTIDE SEQUENCE [LARGE SCALE GENOMIC DNA]</scope>
    <source>
        <strain>DSM 18221 / CIP 109841 / QLW-P1DMWA-1</strain>
    </source>
</reference>
<evidence type="ECO:0000255" key="1">
    <source>
        <dbReference type="HAMAP-Rule" id="MF_00276"/>
    </source>
</evidence>